<comment type="function">
    <text evidence="1">Negatively regulates transcription of bacterial ribonucleotide reductase nrd genes and operons by binding to NrdR-boxes.</text>
</comment>
<comment type="cofactor">
    <cofactor evidence="1">
        <name>Zn(2+)</name>
        <dbReference type="ChEBI" id="CHEBI:29105"/>
    </cofactor>
    <text evidence="1">Binds 1 zinc ion.</text>
</comment>
<comment type="similarity">
    <text evidence="1">Belongs to the NrdR family.</text>
</comment>
<keyword id="KW-0067">ATP-binding</keyword>
<keyword id="KW-0238">DNA-binding</keyword>
<keyword id="KW-0479">Metal-binding</keyword>
<keyword id="KW-0547">Nucleotide-binding</keyword>
<keyword id="KW-1185">Reference proteome</keyword>
<keyword id="KW-0678">Repressor</keyword>
<keyword id="KW-0804">Transcription</keyword>
<keyword id="KW-0805">Transcription regulation</keyword>
<keyword id="KW-0862">Zinc</keyword>
<keyword id="KW-0863">Zinc-finger</keyword>
<organism>
    <name type="scientific">Bradyrhizobium sp. (strain BTAi1 / ATCC BAA-1182)</name>
    <dbReference type="NCBI Taxonomy" id="288000"/>
    <lineage>
        <taxon>Bacteria</taxon>
        <taxon>Pseudomonadati</taxon>
        <taxon>Pseudomonadota</taxon>
        <taxon>Alphaproteobacteria</taxon>
        <taxon>Hyphomicrobiales</taxon>
        <taxon>Nitrobacteraceae</taxon>
        <taxon>Bradyrhizobium</taxon>
    </lineage>
</organism>
<evidence type="ECO:0000255" key="1">
    <source>
        <dbReference type="HAMAP-Rule" id="MF_00440"/>
    </source>
</evidence>
<evidence type="ECO:0000256" key="2">
    <source>
        <dbReference type="SAM" id="MobiDB-lite"/>
    </source>
</evidence>
<accession>A5EKI2</accession>
<name>NRDR_BRASB</name>
<gene>
    <name evidence="1" type="primary">nrdR</name>
    <name type="ordered locus">BBta_4648</name>
</gene>
<proteinExistence type="inferred from homology"/>
<sequence>MRCPSCNSLDTQVKDSRPTEDSSVIRRRRVCVTCNFRFTTFERVQLRELTVIKRNGRRVPFDRDKLMRSVQISLRKRSVDPERVEKMVSAIVRELESGGESEVSSEAIGEIVMEHLRDLDDVAYVRFASVYRNFREAKDFEAVLGELSAEDEAPRLAPVRK</sequence>
<reference key="1">
    <citation type="journal article" date="2007" name="Science">
        <title>Legumes symbioses: absence of nod genes in photosynthetic bradyrhizobia.</title>
        <authorList>
            <person name="Giraud E."/>
            <person name="Moulin L."/>
            <person name="Vallenet D."/>
            <person name="Barbe V."/>
            <person name="Cytryn E."/>
            <person name="Avarre J.-C."/>
            <person name="Jaubert M."/>
            <person name="Simon D."/>
            <person name="Cartieaux F."/>
            <person name="Prin Y."/>
            <person name="Bena G."/>
            <person name="Hannibal L."/>
            <person name="Fardoux J."/>
            <person name="Kojadinovic M."/>
            <person name="Vuillet L."/>
            <person name="Lajus A."/>
            <person name="Cruveiller S."/>
            <person name="Rouy Z."/>
            <person name="Mangenot S."/>
            <person name="Segurens B."/>
            <person name="Dossat C."/>
            <person name="Franck W.L."/>
            <person name="Chang W.-S."/>
            <person name="Saunders E."/>
            <person name="Bruce D."/>
            <person name="Richardson P."/>
            <person name="Normand P."/>
            <person name="Dreyfus B."/>
            <person name="Pignol D."/>
            <person name="Stacey G."/>
            <person name="Emerich D."/>
            <person name="Vermeglio A."/>
            <person name="Medigue C."/>
            <person name="Sadowsky M."/>
        </authorList>
    </citation>
    <scope>NUCLEOTIDE SEQUENCE [LARGE SCALE GENOMIC DNA]</scope>
    <source>
        <strain>BTAi1 / ATCC BAA-1182</strain>
    </source>
</reference>
<feature type="chain" id="PRO_1000080715" description="Transcriptional repressor NrdR">
    <location>
        <begin position="1"/>
        <end position="161"/>
    </location>
</feature>
<feature type="domain" description="ATP-cone" evidence="1">
    <location>
        <begin position="49"/>
        <end position="139"/>
    </location>
</feature>
<feature type="zinc finger region" evidence="1">
    <location>
        <begin position="3"/>
        <end position="34"/>
    </location>
</feature>
<feature type="region of interest" description="Disordered" evidence="2">
    <location>
        <begin position="1"/>
        <end position="20"/>
    </location>
</feature>
<feature type="compositionally biased region" description="Polar residues" evidence="2">
    <location>
        <begin position="1"/>
        <end position="11"/>
    </location>
</feature>
<dbReference type="EMBL" id="CP000494">
    <property type="protein sequence ID" value="ABQ36676.1"/>
    <property type="molecule type" value="Genomic_DNA"/>
</dbReference>
<dbReference type="RefSeq" id="WP_006612773.1">
    <property type="nucleotide sequence ID" value="NC_009485.1"/>
</dbReference>
<dbReference type="SMR" id="A5EKI2"/>
<dbReference type="STRING" id="288000.BBta_4648"/>
<dbReference type="KEGG" id="bbt:BBta_4648"/>
<dbReference type="eggNOG" id="COG1327">
    <property type="taxonomic scope" value="Bacteria"/>
</dbReference>
<dbReference type="HOGENOM" id="CLU_108412_0_1_5"/>
<dbReference type="OrthoDB" id="9807461at2"/>
<dbReference type="Proteomes" id="UP000000246">
    <property type="component" value="Chromosome"/>
</dbReference>
<dbReference type="GO" id="GO:0005524">
    <property type="term" value="F:ATP binding"/>
    <property type="evidence" value="ECO:0007669"/>
    <property type="project" value="UniProtKB-KW"/>
</dbReference>
<dbReference type="GO" id="GO:0003677">
    <property type="term" value="F:DNA binding"/>
    <property type="evidence" value="ECO:0007669"/>
    <property type="project" value="UniProtKB-KW"/>
</dbReference>
<dbReference type="GO" id="GO:0008270">
    <property type="term" value="F:zinc ion binding"/>
    <property type="evidence" value="ECO:0007669"/>
    <property type="project" value="UniProtKB-UniRule"/>
</dbReference>
<dbReference type="GO" id="GO:0045892">
    <property type="term" value="P:negative regulation of DNA-templated transcription"/>
    <property type="evidence" value="ECO:0007669"/>
    <property type="project" value="UniProtKB-UniRule"/>
</dbReference>
<dbReference type="HAMAP" id="MF_00440">
    <property type="entry name" value="NrdR"/>
    <property type="match status" value="1"/>
</dbReference>
<dbReference type="InterPro" id="IPR005144">
    <property type="entry name" value="ATP-cone_dom"/>
</dbReference>
<dbReference type="InterPro" id="IPR055173">
    <property type="entry name" value="NrdR-like_N"/>
</dbReference>
<dbReference type="InterPro" id="IPR003796">
    <property type="entry name" value="RNR_NrdR-like"/>
</dbReference>
<dbReference type="NCBIfam" id="TIGR00244">
    <property type="entry name" value="transcriptional regulator NrdR"/>
    <property type="match status" value="1"/>
</dbReference>
<dbReference type="PANTHER" id="PTHR30455">
    <property type="entry name" value="TRANSCRIPTIONAL REPRESSOR NRDR"/>
    <property type="match status" value="1"/>
</dbReference>
<dbReference type="PANTHER" id="PTHR30455:SF2">
    <property type="entry name" value="TRANSCRIPTIONAL REPRESSOR NRDR"/>
    <property type="match status" value="1"/>
</dbReference>
<dbReference type="Pfam" id="PF03477">
    <property type="entry name" value="ATP-cone"/>
    <property type="match status" value="1"/>
</dbReference>
<dbReference type="Pfam" id="PF22811">
    <property type="entry name" value="Zn_ribbon_NrdR"/>
    <property type="match status" value="1"/>
</dbReference>
<dbReference type="PROSITE" id="PS51161">
    <property type="entry name" value="ATP_CONE"/>
    <property type="match status" value="1"/>
</dbReference>
<protein>
    <recommendedName>
        <fullName evidence="1">Transcriptional repressor NrdR</fullName>
    </recommendedName>
</protein>